<organism>
    <name type="scientific">Echis carinatus</name>
    <name type="common">Saw-scaled viper</name>
    <dbReference type="NCBI Taxonomy" id="40353"/>
    <lineage>
        <taxon>Eukaryota</taxon>
        <taxon>Metazoa</taxon>
        <taxon>Chordata</taxon>
        <taxon>Craniata</taxon>
        <taxon>Vertebrata</taxon>
        <taxon>Euteleostomi</taxon>
        <taxon>Lepidosauria</taxon>
        <taxon>Squamata</taxon>
        <taxon>Bifurcata</taxon>
        <taxon>Unidentata</taxon>
        <taxon>Episquamata</taxon>
        <taxon>Toxicofera</taxon>
        <taxon>Serpentes</taxon>
        <taxon>Colubroidea</taxon>
        <taxon>Viperidae</taxon>
        <taxon>Viperinae</taxon>
        <taxon>Echis</taxon>
    </lineage>
</organism>
<accession>P48650</accession>
<reference key="1">
    <citation type="journal article" date="1996" name="Biochem. J.">
        <title>Asp-49 is not an absolute prerequisite for the enzymic activity of low-M(r) phospholipases A2: purification, characterization and computer modelling of an enzymically active Ser-49 phospholipase A2, ecarpholin S, from the venom of Echis carinatus sochureki (saw-scaled viper).</title>
        <authorList>
            <person name="Polgar J."/>
            <person name="Magnenat E.M."/>
            <person name="Peitsch M.C."/>
            <person name="Wells T.N.C."/>
            <person name="Clemetson K.J."/>
        </authorList>
    </citation>
    <scope>PROTEIN SEQUENCE</scope>
    <scope>FUNCTION</scope>
    <scope>MASS SPECTROMETRY</scope>
    <scope>3D-STRUCTURE MODELING</scope>
    <scope>SUBCELLULAR LOCATION</scope>
    <source>
        <tissue>Venom</tissue>
    </source>
</reference>
<reference key="2">
    <citation type="journal article" date="2008" name="Biophys. J.">
        <title>Structural characterization of myotoxic ecarpholin S from Echis carinatus venom.</title>
        <authorList>
            <person name="Zhou X."/>
            <person name="Tan T.C."/>
            <person name="Valiyaveettil S."/>
            <person name="Go M.L."/>
            <person name="Kini R.M."/>
            <person name="Velazquez-Campoy A."/>
            <person name="Sivaraman J."/>
        </authorList>
    </citation>
    <scope>X-RAY CRYSTALLOGRAPHY (1.95 ANGSTROMS) IN COMPLEX WITH SURAMIN AND FATTY ACID</scope>
    <scope>DISULFIDE BONDS</scope>
    <scope>FUNCTION</scope>
</reference>
<reference key="3">
    <citation type="journal article" date="2007" name="Biochemistry">
        <title>Restoration of enzymatic activity in a Ser-49 phospholipase A2 homologue decreases its Ca(2+)-independent membrane-damaging activity and increases its toxicity.</title>
        <authorList>
            <person name="Petan T."/>
            <person name="Krizaj I."/>
            <person name="Pungercar J."/>
        </authorList>
    </citation>
    <scope>DISCUSSION</scope>
    <source>
        <tissue>Venom</tissue>
    </source>
</reference>
<name>PA2HS_ECHCA</name>
<evidence type="ECO:0000250" key="1">
    <source>
        <dbReference type="UniProtKB" id="P24605"/>
    </source>
</evidence>
<evidence type="ECO:0000269" key="2">
    <source>
    </source>
</evidence>
<evidence type="ECO:0000269" key="3">
    <source>
    </source>
</evidence>
<evidence type="ECO:0000303" key="4">
    <source>
    </source>
</evidence>
<evidence type="ECO:0000303" key="5">
    <source>
    </source>
</evidence>
<evidence type="ECO:0000305" key="6"/>
<evidence type="ECO:0000305" key="7">
    <source>
    </source>
</evidence>
<evidence type="ECO:0000305" key="8">
    <source>
    </source>
</evidence>
<evidence type="ECO:0007744" key="9">
    <source>
        <dbReference type="PDB" id="2QHD"/>
    </source>
</evidence>
<evidence type="ECO:0007744" key="10">
    <source>
        <dbReference type="PDB" id="2QHE"/>
    </source>
</evidence>
<evidence type="ECO:0007744" key="11">
    <source>
        <dbReference type="PDB" id="3BJW"/>
    </source>
</evidence>
<evidence type="ECO:0007829" key="12">
    <source>
        <dbReference type="PDB" id="2QHD"/>
    </source>
</evidence>
<evidence type="ECO:0007829" key="13">
    <source>
        <dbReference type="PDB" id="2QHE"/>
    </source>
</evidence>
<comment type="function">
    <text evidence="2">Snake venom phospholipase A2 homolog that lacks enzymatic activity. Shows high myotoxin activities and displays edema-inducing activities (PubMed:18586854).</text>
</comment>
<comment type="activity regulation">
    <text evidence="2">Suramin inhibits the myotoxic activity (PubMed:18586854).</text>
</comment>
<comment type="subcellular location">
    <subcellularLocation>
        <location evidence="3">Secreted</location>
    </subcellularLocation>
</comment>
<comment type="tissue specificity">
    <text evidence="8">Expressed by the venom gland.</text>
</comment>
<comment type="mass spectrometry" mass="13805.0" error="2.7" method="Electrospray" evidence="3"/>
<comment type="similarity">
    <text evidence="6">Belongs to the phospholipase A2 family. Group II subfamily. S49 sub-subfamily.</text>
</comment>
<comment type="caution">
    <text evidence="7 8">Has been reported as being enzymatically active and calcium-dependently inducing platelet aggregation (PubMed:8921006). This activity appears to be unlikely in light of the lack of activity of both recombinant AtnL (S49) and bothropstoxin-1 (K49), especially keeping in mind the possibility of contamination of the purified protein with catalytically active sPLA2s. The fact that the high level of enzymatic activity reported was determined on PC substrates and that it was in the range of the human group IIA enzyme, which in fact displays a very low activity on PC-rich substrates, casts further doubt on the reported activity of ecarpholin S (PubMed:17927217).</text>
</comment>
<comment type="caution">
    <text evidence="6">Does not bind calcium as one of the calcium-binding sites is lost (Asp-&gt;Ser in position 48, which corresponds to 'Ser-49' in the current nomenclature).</text>
</comment>
<protein>
    <recommendedName>
        <fullName evidence="4 5">Basic phospholipase A2 homolog ecarpholin S</fullName>
        <shortName evidence="5">Ecs-S49</shortName>
        <shortName>svPLA2 homolog</shortName>
    </recommendedName>
</protein>
<sequence length="122" mass="13819">SVVELGKMIIQETGKSPFPSYTSYGCFCGGGERGPPLDATDRCCLAHSCCYDTLPDCSPKTDRYKYKRENGEIICENSTSCKKRICECDKAVAVCLRKNLNTYNKKYTYYPNFWCKGDIEKC</sequence>
<feature type="chain" id="PRO_0000161643" description="Basic phospholipase A2 homolog ecarpholin S">
    <location>
        <begin position="1"/>
        <end position="122"/>
    </location>
</feature>
<feature type="region of interest" description="Important for membrane-damaging activities in eukaryotes and bacteria; heparin-binding" evidence="1">
    <location>
        <begin position="105"/>
        <end position="117"/>
    </location>
</feature>
<feature type="disulfide bond" evidence="2 9 10 11">
    <location>
        <begin position="26"/>
        <end position="115"/>
    </location>
</feature>
<feature type="disulfide bond" evidence="2 9 10 11">
    <location>
        <begin position="28"/>
        <end position="44"/>
    </location>
</feature>
<feature type="disulfide bond" evidence="2 9 10 11">
    <location>
        <begin position="43"/>
        <end position="95"/>
    </location>
</feature>
<feature type="disulfide bond" evidence="2 9 10 11">
    <location>
        <begin position="49"/>
        <end position="122"/>
    </location>
</feature>
<feature type="disulfide bond" evidence="2 9 10 11">
    <location>
        <begin position="50"/>
        <end position="88"/>
    </location>
</feature>
<feature type="disulfide bond" evidence="2 9 10 11">
    <location>
        <begin position="57"/>
        <end position="81"/>
    </location>
</feature>
<feature type="disulfide bond" evidence="2 9 10 11">
    <location>
        <begin position="75"/>
        <end position="86"/>
    </location>
</feature>
<feature type="helix" evidence="12">
    <location>
        <begin position="2"/>
        <end position="13"/>
    </location>
</feature>
<feature type="helix" evidence="12">
    <location>
        <begin position="17"/>
        <end position="20"/>
    </location>
</feature>
<feature type="turn" evidence="13">
    <location>
        <begin position="21"/>
        <end position="23"/>
    </location>
</feature>
<feature type="turn" evidence="12">
    <location>
        <begin position="25"/>
        <end position="29"/>
    </location>
</feature>
<feature type="helix" evidence="12">
    <location>
        <begin position="39"/>
        <end position="51"/>
    </location>
</feature>
<feature type="turn" evidence="12">
    <location>
        <begin position="59"/>
        <end position="61"/>
    </location>
</feature>
<feature type="strand" evidence="12">
    <location>
        <begin position="66"/>
        <end position="69"/>
    </location>
</feature>
<feature type="strand" evidence="12">
    <location>
        <begin position="72"/>
        <end position="75"/>
    </location>
</feature>
<feature type="helix" evidence="12">
    <location>
        <begin position="80"/>
        <end position="98"/>
    </location>
</feature>
<feature type="helix" evidence="12">
    <location>
        <begin position="100"/>
        <end position="102"/>
    </location>
</feature>
<feature type="helix" evidence="12">
    <location>
        <begin position="105"/>
        <end position="107"/>
    </location>
</feature>
<feature type="helix" evidence="12">
    <location>
        <begin position="112"/>
        <end position="114"/>
    </location>
</feature>
<keyword id="KW-0002">3D-structure</keyword>
<keyword id="KW-0903">Direct protein sequencing</keyword>
<keyword id="KW-1015">Disulfide bond</keyword>
<keyword id="KW-0964">Secreted</keyword>
<proteinExistence type="evidence at protein level"/>
<dbReference type="PDB" id="2QHD">
    <property type="method" value="X-ray"/>
    <property type="resolution" value="1.95 A"/>
    <property type="chains" value="A/B=1-122"/>
</dbReference>
<dbReference type="PDB" id="2QHE">
    <property type="method" value="X-ray"/>
    <property type="resolution" value="2.00 A"/>
    <property type="chains" value="A=1-122"/>
</dbReference>
<dbReference type="PDB" id="3BJW">
    <property type="method" value="X-ray"/>
    <property type="resolution" value="2.30 A"/>
    <property type="chains" value="A/B/C/D/E/F/G/H=1-122"/>
</dbReference>
<dbReference type="PDBsum" id="2QHD"/>
<dbReference type="PDBsum" id="2QHE"/>
<dbReference type="PDBsum" id="3BJW"/>
<dbReference type="SMR" id="P48650"/>
<dbReference type="EvolutionaryTrace" id="P48650"/>
<dbReference type="GO" id="GO:0005576">
    <property type="term" value="C:extracellular region"/>
    <property type="evidence" value="ECO:0007669"/>
    <property type="project" value="UniProtKB-SubCell"/>
</dbReference>
<dbReference type="GO" id="GO:0005509">
    <property type="term" value="F:calcium ion binding"/>
    <property type="evidence" value="ECO:0007669"/>
    <property type="project" value="InterPro"/>
</dbReference>
<dbReference type="GO" id="GO:0047498">
    <property type="term" value="F:calcium-dependent phospholipase A2 activity"/>
    <property type="evidence" value="ECO:0007669"/>
    <property type="project" value="TreeGrafter"/>
</dbReference>
<dbReference type="GO" id="GO:0005543">
    <property type="term" value="F:phospholipid binding"/>
    <property type="evidence" value="ECO:0007669"/>
    <property type="project" value="TreeGrafter"/>
</dbReference>
<dbReference type="GO" id="GO:0050482">
    <property type="term" value="P:arachidonate secretion"/>
    <property type="evidence" value="ECO:0007669"/>
    <property type="project" value="InterPro"/>
</dbReference>
<dbReference type="GO" id="GO:0016042">
    <property type="term" value="P:lipid catabolic process"/>
    <property type="evidence" value="ECO:0007669"/>
    <property type="project" value="InterPro"/>
</dbReference>
<dbReference type="GO" id="GO:0042130">
    <property type="term" value="P:negative regulation of T cell proliferation"/>
    <property type="evidence" value="ECO:0007669"/>
    <property type="project" value="TreeGrafter"/>
</dbReference>
<dbReference type="GO" id="GO:0006644">
    <property type="term" value="P:phospholipid metabolic process"/>
    <property type="evidence" value="ECO:0007669"/>
    <property type="project" value="InterPro"/>
</dbReference>
<dbReference type="CDD" id="cd00125">
    <property type="entry name" value="PLA2c"/>
    <property type="match status" value="1"/>
</dbReference>
<dbReference type="FunFam" id="1.20.90.10:FF:000001">
    <property type="entry name" value="Basic phospholipase A2 homolog"/>
    <property type="match status" value="1"/>
</dbReference>
<dbReference type="Gene3D" id="1.20.90.10">
    <property type="entry name" value="Phospholipase A2 domain"/>
    <property type="match status" value="1"/>
</dbReference>
<dbReference type="InterPro" id="IPR001211">
    <property type="entry name" value="PLipase_A2"/>
</dbReference>
<dbReference type="InterPro" id="IPR033112">
    <property type="entry name" value="PLipase_A2_Asp_AS"/>
</dbReference>
<dbReference type="InterPro" id="IPR016090">
    <property type="entry name" value="PLipase_A2_dom"/>
</dbReference>
<dbReference type="InterPro" id="IPR036444">
    <property type="entry name" value="PLipase_A2_dom_sf"/>
</dbReference>
<dbReference type="InterPro" id="IPR033113">
    <property type="entry name" value="PLipase_A2_His_AS"/>
</dbReference>
<dbReference type="PANTHER" id="PTHR11716">
    <property type="entry name" value="PHOSPHOLIPASE A2 FAMILY MEMBER"/>
    <property type="match status" value="1"/>
</dbReference>
<dbReference type="PANTHER" id="PTHR11716:SF9">
    <property type="entry name" value="PHOSPHOLIPASE A2, MEMBRANE ASSOCIATED"/>
    <property type="match status" value="1"/>
</dbReference>
<dbReference type="Pfam" id="PF00068">
    <property type="entry name" value="Phospholip_A2_1"/>
    <property type="match status" value="1"/>
</dbReference>
<dbReference type="PRINTS" id="PR00389">
    <property type="entry name" value="PHPHLIPASEA2"/>
</dbReference>
<dbReference type="SMART" id="SM00085">
    <property type="entry name" value="PA2c"/>
    <property type="match status" value="1"/>
</dbReference>
<dbReference type="SUPFAM" id="SSF48619">
    <property type="entry name" value="Phospholipase A2, PLA2"/>
    <property type="match status" value="1"/>
</dbReference>
<dbReference type="PROSITE" id="PS00119">
    <property type="entry name" value="PA2_ASP"/>
    <property type="match status" value="1"/>
</dbReference>
<dbReference type="PROSITE" id="PS00118">
    <property type="entry name" value="PA2_HIS"/>
    <property type="match status" value="1"/>
</dbReference>